<protein>
    <recommendedName>
        <fullName evidence="1">Malate dehydrogenase</fullName>
        <ecNumber evidence="1">1.1.1.37</ecNumber>
    </recommendedName>
</protein>
<evidence type="ECO:0000255" key="1">
    <source>
        <dbReference type="HAMAP-Rule" id="MF_00487"/>
    </source>
</evidence>
<dbReference type="EC" id="1.1.1.37" evidence="1"/>
<dbReference type="EMBL" id="AP006841">
    <property type="protein sequence ID" value="BAD50720.1"/>
    <property type="molecule type" value="Genomic_DNA"/>
</dbReference>
<dbReference type="RefSeq" id="WP_005791692.1">
    <property type="nucleotide sequence ID" value="NZ_UYXF01000013.1"/>
</dbReference>
<dbReference type="RefSeq" id="YP_101254.1">
    <property type="nucleotide sequence ID" value="NC_006347.1"/>
</dbReference>
<dbReference type="SMR" id="Q64P62"/>
<dbReference type="STRING" id="295405.BF3978"/>
<dbReference type="GeneID" id="60366767"/>
<dbReference type="KEGG" id="bfr:BF3978"/>
<dbReference type="PATRIC" id="fig|295405.11.peg.3828"/>
<dbReference type="HOGENOM" id="CLU_045401_2_1_10"/>
<dbReference type="OrthoDB" id="9802969at2"/>
<dbReference type="Proteomes" id="UP000002197">
    <property type="component" value="Chromosome"/>
</dbReference>
<dbReference type="GO" id="GO:0004459">
    <property type="term" value="F:L-lactate dehydrogenase activity"/>
    <property type="evidence" value="ECO:0007669"/>
    <property type="project" value="TreeGrafter"/>
</dbReference>
<dbReference type="GO" id="GO:0030060">
    <property type="term" value="F:L-malate dehydrogenase (NAD+) activity"/>
    <property type="evidence" value="ECO:0007669"/>
    <property type="project" value="UniProtKB-UniRule"/>
</dbReference>
<dbReference type="GO" id="GO:0006089">
    <property type="term" value="P:lactate metabolic process"/>
    <property type="evidence" value="ECO:0007669"/>
    <property type="project" value="TreeGrafter"/>
</dbReference>
<dbReference type="GO" id="GO:0006099">
    <property type="term" value="P:tricarboxylic acid cycle"/>
    <property type="evidence" value="ECO:0007669"/>
    <property type="project" value="UniProtKB-UniRule"/>
</dbReference>
<dbReference type="CDD" id="cd01339">
    <property type="entry name" value="LDH-like_MDH"/>
    <property type="match status" value="1"/>
</dbReference>
<dbReference type="FunFam" id="3.40.50.720:FF:000018">
    <property type="entry name" value="Malate dehydrogenase"/>
    <property type="match status" value="1"/>
</dbReference>
<dbReference type="FunFam" id="3.90.110.10:FF:000004">
    <property type="entry name" value="Malate dehydrogenase"/>
    <property type="match status" value="1"/>
</dbReference>
<dbReference type="Gene3D" id="3.90.110.10">
    <property type="entry name" value="Lactate dehydrogenase/glycoside hydrolase, family 4, C-terminal"/>
    <property type="match status" value="1"/>
</dbReference>
<dbReference type="Gene3D" id="3.40.50.720">
    <property type="entry name" value="NAD(P)-binding Rossmann-like Domain"/>
    <property type="match status" value="1"/>
</dbReference>
<dbReference type="HAMAP" id="MF_00487">
    <property type="entry name" value="Malate_dehydrog_3"/>
    <property type="match status" value="1"/>
</dbReference>
<dbReference type="InterPro" id="IPR001557">
    <property type="entry name" value="L-lactate/malate_DH"/>
</dbReference>
<dbReference type="InterPro" id="IPR022383">
    <property type="entry name" value="Lactate/malate_DH_C"/>
</dbReference>
<dbReference type="InterPro" id="IPR001236">
    <property type="entry name" value="Lactate/malate_DH_N"/>
</dbReference>
<dbReference type="InterPro" id="IPR015955">
    <property type="entry name" value="Lactate_DH/Glyco_Ohase_4_C"/>
</dbReference>
<dbReference type="InterPro" id="IPR011275">
    <property type="entry name" value="Malate_DH_type3"/>
</dbReference>
<dbReference type="InterPro" id="IPR036291">
    <property type="entry name" value="NAD(P)-bd_dom_sf"/>
</dbReference>
<dbReference type="NCBIfam" id="TIGR01763">
    <property type="entry name" value="MalateDH_bact"/>
    <property type="match status" value="1"/>
</dbReference>
<dbReference type="NCBIfam" id="NF004863">
    <property type="entry name" value="PRK06223.1"/>
    <property type="match status" value="1"/>
</dbReference>
<dbReference type="PANTHER" id="PTHR43128">
    <property type="entry name" value="L-2-HYDROXYCARBOXYLATE DEHYDROGENASE (NAD(P)(+))"/>
    <property type="match status" value="1"/>
</dbReference>
<dbReference type="PANTHER" id="PTHR43128:SF16">
    <property type="entry name" value="L-LACTATE DEHYDROGENASE"/>
    <property type="match status" value="1"/>
</dbReference>
<dbReference type="Pfam" id="PF02866">
    <property type="entry name" value="Ldh_1_C"/>
    <property type="match status" value="1"/>
</dbReference>
<dbReference type="Pfam" id="PF00056">
    <property type="entry name" value="Ldh_1_N"/>
    <property type="match status" value="1"/>
</dbReference>
<dbReference type="PIRSF" id="PIRSF000102">
    <property type="entry name" value="Lac_mal_DH"/>
    <property type="match status" value="1"/>
</dbReference>
<dbReference type="PRINTS" id="PR00086">
    <property type="entry name" value="LLDHDRGNASE"/>
</dbReference>
<dbReference type="SUPFAM" id="SSF56327">
    <property type="entry name" value="LDH C-terminal domain-like"/>
    <property type="match status" value="1"/>
</dbReference>
<dbReference type="SUPFAM" id="SSF51735">
    <property type="entry name" value="NAD(P)-binding Rossmann-fold domains"/>
    <property type="match status" value="1"/>
</dbReference>
<keyword id="KW-0520">NAD</keyword>
<keyword id="KW-0560">Oxidoreductase</keyword>
<keyword id="KW-0816">Tricarboxylic acid cycle</keyword>
<accession>Q64P62</accession>
<sequence>MSKVTVVGAGNVGATCANVLAFNEVADEVVMLDVKEGVSEGKAMDMMQTAQLLGFDTTIVGCTNDYAQTANSDVVVITSGIPRKPGMTREELIGVNAGIVKSVAENLLKYSPNAIIVVISNPMDTMTYLALKSLGLPKNRVIGMGGALDSSRFKYFLSQALGCNANEVEGMVIGGHGDTTMIPLARLATYKGQPVSTLLSEEKLNEVVASTMVGGATLTKLLGTSAWYAPGAAGAYVVESIIHNQKKMVPCSVMLEGEYGESDLCIGVPVILGKNGIEKIVELELNADEKAKFAASAAAVHKTNAALKEVGAL</sequence>
<organism>
    <name type="scientific">Bacteroides fragilis (strain YCH46)</name>
    <dbReference type="NCBI Taxonomy" id="295405"/>
    <lineage>
        <taxon>Bacteria</taxon>
        <taxon>Pseudomonadati</taxon>
        <taxon>Bacteroidota</taxon>
        <taxon>Bacteroidia</taxon>
        <taxon>Bacteroidales</taxon>
        <taxon>Bacteroidaceae</taxon>
        <taxon>Bacteroides</taxon>
    </lineage>
</organism>
<name>MDH_BACFR</name>
<reference key="1">
    <citation type="journal article" date="2004" name="Proc. Natl. Acad. Sci. U.S.A.">
        <title>Genomic analysis of Bacteroides fragilis reveals extensive DNA inversions regulating cell surface adaptation.</title>
        <authorList>
            <person name="Kuwahara T."/>
            <person name="Yamashita A."/>
            <person name="Hirakawa H."/>
            <person name="Nakayama H."/>
            <person name="Toh H."/>
            <person name="Okada N."/>
            <person name="Kuhara S."/>
            <person name="Hattori M."/>
            <person name="Hayashi T."/>
            <person name="Ohnishi Y."/>
        </authorList>
    </citation>
    <scope>NUCLEOTIDE SEQUENCE [LARGE SCALE GENOMIC DNA]</scope>
    <source>
        <strain>YCH46</strain>
    </source>
</reference>
<gene>
    <name evidence="1" type="primary">mdh</name>
    <name type="ordered locus">BF3978</name>
</gene>
<feature type="chain" id="PRO_0000113428" description="Malate dehydrogenase">
    <location>
        <begin position="1"/>
        <end position="313"/>
    </location>
</feature>
<feature type="active site" description="Proton acceptor" evidence="1">
    <location>
        <position position="176"/>
    </location>
</feature>
<feature type="binding site" evidence="1">
    <location>
        <begin position="8"/>
        <end position="13"/>
    </location>
    <ligand>
        <name>NAD(+)</name>
        <dbReference type="ChEBI" id="CHEBI:57540"/>
    </ligand>
</feature>
<feature type="binding site" evidence="1">
    <location>
        <position position="33"/>
    </location>
    <ligand>
        <name>NAD(+)</name>
        <dbReference type="ChEBI" id="CHEBI:57540"/>
    </ligand>
</feature>
<feature type="binding site" evidence="1">
    <location>
        <position position="83"/>
    </location>
    <ligand>
        <name>substrate</name>
    </ligand>
</feature>
<feature type="binding site" evidence="1">
    <location>
        <position position="89"/>
    </location>
    <ligand>
        <name>substrate</name>
    </ligand>
</feature>
<feature type="binding site" evidence="1">
    <location>
        <position position="96"/>
    </location>
    <ligand>
        <name>NAD(+)</name>
        <dbReference type="ChEBI" id="CHEBI:57540"/>
    </ligand>
</feature>
<feature type="binding site" evidence="1">
    <location>
        <begin position="119"/>
        <end position="121"/>
    </location>
    <ligand>
        <name>NAD(+)</name>
        <dbReference type="ChEBI" id="CHEBI:57540"/>
    </ligand>
</feature>
<feature type="binding site" evidence="1">
    <location>
        <position position="121"/>
    </location>
    <ligand>
        <name>substrate</name>
    </ligand>
</feature>
<feature type="binding site" evidence="1">
    <location>
        <position position="152"/>
    </location>
    <ligand>
        <name>substrate</name>
    </ligand>
</feature>
<comment type="function">
    <text evidence="1">Catalyzes the reversible oxidation of malate to oxaloacetate.</text>
</comment>
<comment type="catalytic activity">
    <reaction evidence="1">
        <text>(S)-malate + NAD(+) = oxaloacetate + NADH + H(+)</text>
        <dbReference type="Rhea" id="RHEA:21432"/>
        <dbReference type="ChEBI" id="CHEBI:15378"/>
        <dbReference type="ChEBI" id="CHEBI:15589"/>
        <dbReference type="ChEBI" id="CHEBI:16452"/>
        <dbReference type="ChEBI" id="CHEBI:57540"/>
        <dbReference type="ChEBI" id="CHEBI:57945"/>
        <dbReference type="EC" id="1.1.1.37"/>
    </reaction>
</comment>
<comment type="similarity">
    <text evidence="1">Belongs to the LDH/MDH superfamily. MDH type 3 family.</text>
</comment>
<proteinExistence type="inferred from homology"/>